<protein>
    <recommendedName>
        <fullName evidence="1">Large ribosomal subunit protein uL14c</fullName>
    </recommendedName>
    <alternativeName>
        <fullName evidence="2">50S ribosomal protein L14, chloroplastic</fullName>
    </alternativeName>
</protein>
<reference key="1">
    <citation type="journal article" date="2008" name="BMC Plant Biol.">
        <title>Comparative chloroplast genomics and phylogenetics of Fagopyrum esculentum ssp. ancestrale - a wild ancestor of cultivated buckwheat.</title>
        <authorList>
            <person name="Logacheva M.D."/>
            <person name="Samigullin T.H."/>
            <person name="Dhingra A."/>
            <person name="Penin A.A."/>
        </authorList>
    </citation>
    <scope>NUCLEOTIDE SEQUENCE [LARGE SCALE GENOMIC DNA]</scope>
</reference>
<accession>B2XWR0</accession>
<keyword id="KW-0150">Chloroplast</keyword>
<keyword id="KW-0934">Plastid</keyword>
<keyword id="KW-0687">Ribonucleoprotein</keyword>
<keyword id="KW-0689">Ribosomal protein</keyword>
<keyword id="KW-0694">RNA-binding</keyword>
<keyword id="KW-0699">rRNA-binding</keyword>
<evidence type="ECO:0000255" key="1">
    <source>
        <dbReference type="HAMAP-Rule" id="MF_01367"/>
    </source>
</evidence>
<evidence type="ECO:0000305" key="2"/>
<gene>
    <name evidence="1" type="primary">rpl14</name>
</gene>
<geneLocation type="chloroplast"/>
<organism>
    <name type="scientific">Fagopyrum esculentum subsp. ancestrale</name>
    <name type="common">Wild buckwheat</name>
    <dbReference type="NCBI Taxonomy" id="180217"/>
    <lineage>
        <taxon>Eukaryota</taxon>
        <taxon>Viridiplantae</taxon>
        <taxon>Streptophyta</taxon>
        <taxon>Embryophyta</taxon>
        <taxon>Tracheophyta</taxon>
        <taxon>Spermatophyta</taxon>
        <taxon>Magnoliopsida</taxon>
        <taxon>eudicotyledons</taxon>
        <taxon>Gunneridae</taxon>
        <taxon>Pentapetalae</taxon>
        <taxon>Caryophyllales</taxon>
        <taxon>Polygonaceae</taxon>
        <taxon>Polygonoideae</taxon>
        <taxon>Fagopyreae</taxon>
        <taxon>Fagopyrum</taxon>
    </lineage>
</organism>
<name>RK14_FAGEA</name>
<feature type="chain" id="PRO_0000355879" description="Large ribosomal subunit protein uL14c">
    <location>
        <begin position="1"/>
        <end position="122"/>
    </location>
</feature>
<sequence length="122" mass="13711">MIQPQTYLNVADNSGARELMCIRIIGASNRRYAHIGDIIVAVIKEAIPNMPLERSEVIRAVIVRTRKELKRENGMIIRYDDNAAVIIDQKGNPKGTRVFGAIARELRQLNFTKIVSLAPEVL</sequence>
<proteinExistence type="inferred from homology"/>
<comment type="function">
    <text evidence="1">Binds to 23S rRNA.</text>
</comment>
<comment type="subunit">
    <text evidence="1">Part of the 50S ribosomal subunit.</text>
</comment>
<comment type="subcellular location">
    <subcellularLocation>
        <location>Plastid</location>
        <location>Chloroplast</location>
    </subcellularLocation>
</comment>
<comment type="similarity">
    <text evidence="1">Belongs to the universal ribosomal protein uL14 family.</text>
</comment>
<dbReference type="EMBL" id="EU254477">
    <property type="protein sequence ID" value="ABY79769.1"/>
    <property type="molecule type" value="Genomic_DNA"/>
</dbReference>
<dbReference type="RefSeq" id="YP_001936554.1">
    <property type="nucleotide sequence ID" value="NC_010776.1"/>
</dbReference>
<dbReference type="SMR" id="B2XWR0"/>
<dbReference type="GeneID" id="6336035"/>
<dbReference type="GO" id="GO:0009507">
    <property type="term" value="C:chloroplast"/>
    <property type="evidence" value="ECO:0007669"/>
    <property type="project" value="UniProtKB-SubCell"/>
</dbReference>
<dbReference type="GO" id="GO:0022625">
    <property type="term" value="C:cytosolic large ribosomal subunit"/>
    <property type="evidence" value="ECO:0007669"/>
    <property type="project" value="TreeGrafter"/>
</dbReference>
<dbReference type="GO" id="GO:0070180">
    <property type="term" value="F:large ribosomal subunit rRNA binding"/>
    <property type="evidence" value="ECO:0007669"/>
    <property type="project" value="TreeGrafter"/>
</dbReference>
<dbReference type="GO" id="GO:0003735">
    <property type="term" value="F:structural constituent of ribosome"/>
    <property type="evidence" value="ECO:0007669"/>
    <property type="project" value="InterPro"/>
</dbReference>
<dbReference type="GO" id="GO:0006412">
    <property type="term" value="P:translation"/>
    <property type="evidence" value="ECO:0007669"/>
    <property type="project" value="UniProtKB-UniRule"/>
</dbReference>
<dbReference type="CDD" id="cd00337">
    <property type="entry name" value="Ribosomal_uL14"/>
    <property type="match status" value="1"/>
</dbReference>
<dbReference type="FunFam" id="2.40.150.20:FF:000002">
    <property type="entry name" value="50S ribosomal protein L14, chloroplastic"/>
    <property type="match status" value="1"/>
</dbReference>
<dbReference type="Gene3D" id="2.40.150.20">
    <property type="entry name" value="Ribosomal protein L14"/>
    <property type="match status" value="1"/>
</dbReference>
<dbReference type="HAMAP" id="MF_01367">
    <property type="entry name" value="Ribosomal_uL14"/>
    <property type="match status" value="1"/>
</dbReference>
<dbReference type="InterPro" id="IPR000218">
    <property type="entry name" value="Ribosomal_uL14"/>
</dbReference>
<dbReference type="InterPro" id="IPR005745">
    <property type="entry name" value="Ribosomal_uL14_bac-type"/>
</dbReference>
<dbReference type="InterPro" id="IPR019972">
    <property type="entry name" value="Ribosomal_uL14_CS"/>
</dbReference>
<dbReference type="InterPro" id="IPR036853">
    <property type="entry name" value="Ribosomal_uL14_sf"/>
</dbReference>
<dbReference type="NCBIfam" id="TIGR01067">
    <property type="entry name" value="rplN_bact"/>
    <property type="match status" value="1"/>
</dbReference>
<dbReference type="PANTHER" id="PTHR11761">
    <property type="entry name" value="50S/60S RIBOSOMAL PROTEIN L14/L23"/>
    <property type="match status" value="1"/>
</dbReference>
<dbReference type="PANTHER" id="PTHR11761:SF3">
    <property type="entry name" value="LARGE RIBOSOMAL SUBUNIT PROTEIN UL14M"/>
    <property type="match status" value="1"/>
</dbReference>
<dbReference type="Pfam" id="PF00238">
    <property type="entry name" value="Ribosomal_L14"/>
    <property type="match status" value="1"/>
</dbReference>
<dbReference type="SMART" id="SM01374">
    <property type="entry name" value="Ribosomal_L14"/>
    <property type="match status" value="1"/>
</dbReference>
<dbReference type="SUPFAM" id="SSF50193">
    <property type="entry name" value="Ribosomal protein L14"/>
    <property type="match status" value="1"/>
</dbReference>
<dbReference type="PROSITE" id="PS00049">
    <property type="entry name" value="RIBOSOMAL_L14"/>
    <property type="match status" value="1"/>
</dbReference>